<keyword id="KW-0134">Cell wall</keyword>
<keyword id="KW-0903">Direct protein sequencing</keyword>
<keyword id="KW-1185">Reference proteome</keyword>
<keyword id="KW-0964">Secreted</keyword>
<sequence length="7" mass="844">GPEEWVK</sequence>
<accession>P80797</accession>
<reference evidence="3" key="1">
    <citation type="journal article" date="1997" name="J. Biol. Chem.">
        <title>Differential extraction and protein sequencing reveals major differences in patterns of primary cell wall proteins from plants.</title>
        <authorList>
            <person name="Robertson D."/>
            <person name="Mitchell G.P."/>
            <person name="Gilroy J.S."/>
            <person name="Gerrish C."/>
            <person name="Bolwell G.P."/>
            <person name="Slabas A.R."/>
        </authorList>
    </citation>
    <scope>PROTEIN SEQUENCE</scope>
    <scope>SUBCELLULAR LOCATION</scope>
</reference>
<proteinExistence type="evidence at protein level"/>
<feature type="chain" id="PRO_0000079692" description="46 kDa cell wall protein">
    <location>
        <begin position="1"/>
        <end position="7" status="greater than"/>
    </location>
</feature>
<feature type="non-terminal residue" evidence="2">
    <location>
        <position position="7"/>
    </location>
</feature>
<dbReference type="Proteomes" id="UP000084051">
    <property type="component" value="Unplaced"/>
</dbReference>
<dbReference type="GO" id="GO:0005576">
    <property type="term" value="C:extracellular region"/>
    <property type="evidence" value="ECO:0007669"/>
    <property type="project" value="UniProtKB-KW"/>
</dbReference>
<comment type="subcellular location">
    <subcellularLocation>
        <location evidence="1">Secreted</location>
        <location evidence="1">Cell wall</location>
    </subcellularLocation>
</comment>
<organism>
    <name type="scientific">Nicotiana tabacum</name>
    <name type="common">Common tobacco</name>
    <dbReference type="NCBI Taxonomy" id="4097"/>
    <lineage>
        <taxon>Eukaryota</taxon>
        <taxon>Viridiplantae</taxon>
        <taxon>Streptophyta</taxon>
        <taxon>Embryophyta</taxon>
        <taxon>Tracheophyta</taxon>
        <taxon>Spermatophyta</taxon>
        <taxon>Magnoliopsida</taxon>
        <taxon>eudicotyledons</taxon>
        <taxon>Gunneridae</taxon>
        <taxon>Pentapetalae</taxon>
        <taxon>asterids</taxon>
        <taxon>lamiids</taxon>
        <taxon>Solanales</taxon>
        <taxon>Solanaceae</taxon>
        <taxon>Nicotianoideae</taxon>
        <taxon>Nicotianeae</taxon>
        <taxon>Nicotiana</taxon>
    </lineage>
</organism>
<name>CWP20_TOBAC</name>
<protein>
    <recommendedName>
        <fullName>46 kDa cell wall protein</fullName>
    </recommendedName>
</protein>
<evidence type="ECO:0000269" key="1">
    <source>
    </source>
</evidence>
<evidence type="ECO:0000303" key="2">
    <source>
    </source>
</evidence>
<evidence type="ECO:0000305" key="3"/>